<proteinExistence type="inferred from homology"/>
<accession>Q58921</accession>
<name>Y1526_METJA</name>
<keyword id="KW-1185">Reference proteome</keyword>
<evidence type="ECO:0000255" key="1">
    <source>
        <dbReference type="HAMAP-Rule" id="MF_01079"/>
    </source>
</evidence>
<organism>
    <name type="scientific">Methanocaldococcus jannaschii (strain ATCC 43067 / DSM 2661 / JAL-1 / JCM 10045 / NBRC 100440)</name>
    <name type="common">Methanococcus jannaschii</name>
    <dbReference type="NCBI Taxonomy" id="243232"/>
    <lineage>
        <taxon>Archaea</taxon>
        <taxon>Methanobacteriati</taxon>
        <taxon>Methanobacteriota</taxon>
        <taxon>Methanomada group</taxon>
        <taxon>Methanococci</taxon>
        <taxon>Methanococcales</taxon>
        <taxon>Methanocaldococcaceae</taxon>
        <taxon>Methanocaldococcus</taxon>
    </lineage>
</organism>
<feature type="chain" id="PRO_0000140486" description="UPF0280 protein MJ1526">
    <location>
        <begin position="1"/>
        <end position="244"/>
    </location>
</feature>
<protein>
    <recommendedName>
        <fullName evidence="1">UPF0280 protein MJ1526</fullName>
    </recommendedName>
</protein>
<dbReference type="EMBL" id="L77117">
    <property type="protein sequence ID" value="AAB99544.1"/>
    <property type="molecule type" value="Genomic_DNA"/>
</dbReference>
<dbReference type="PIR" id="E64490">
    <property type="entry name" value="E64490"/>
</dbReference>
<dbReference type="RefSeq" id="WP_010871050.1">
    <property type="nucleotide sequence ID" value="NC_000909.1"/>
</dbReference>
<dbReference type="SMR" id="Q58921"/>
<dbReference type="STRING" id="243232.MJ_1526"/>
<dbReference type="PaxDb" id="243232-MJ_1526"/>
<dbReference type="EnsemblBacteria" id="AAB99544">
    <property type="protein sequence ID" value="AAB99544"/>
    <property type="gene ID" value="MJ_1526"/>
</dbReference>
<dbReference type="GeneID" id="1452434"/>
<dbReference type="KEGG" id="mja:MJ_1526"/>
<dbReference type="eggNOG" id="arCOG04376">
    <property type="taxonomic scope" value="Archaea"/>
</dbReference>
<dbReference type="HOGENOM" id="CLU_074757_0_0_2"/>
<dbReference type="InParanoid" id="Q58921"/>
<dbReference type="OrthoDB" id="50299at2157"/>
<dbReference type="PhylomeDB" id="Q58921"/>
<dbReference type="Proteomes" id="UP000000805">
    <property type="component" value="Chromosome"/>
</dbReference>
<dbReference type="Gene3D" id="3.10.520.10">
    <property type="entry name" value="ApbE-like domains"/>
    <property type="match status" value="1"/>
</dbReference>
<dbReference type="HAMAP" id="MF_01079">
    <property type="entry name" value="UPF0280"/>
    <property type="match status" value="1"/>
</dbReference>
<dbReference type="InterPro" id="IPR003374">
    <property type="entry name" value="ApbE-like_sf"/>
</dbReference>
<dbReference type="InterPro" id="IPR037456">
    <property type="entry name" value="MA1715-like"/>
</dbReference>
<dbReference type="InterPro" id="IPR007183">
    <property type="entry name" value="UPF0280"/>
</dbReference>
<dbReference type="NCBIfam" id="NF003321">
    <property type="entry name" value="PRK04334.1-1"/>
    <property type="match status" value="1"/>
</dbReference>
<dbReference type="PIRSF" id="PIRSF006421">
    <property type="entry name" value="UCP006421"/>
    <property type="match status" value="1"/>
</dbReference>
<dbReference type="SUPFAM" id="SSF143631">
    <property type="entry name" value="ApbE-like"/>
    <property type="match status" value="1"/>
</dbReference>
<gene>
    <name type="ordered locus">MJ1526</name>
</gene>
<reference key="1">
    <citation type="journal article" date="1996" name="Science">
        <title>Complete genome sequence of the methanogenic archaeon, Methanococcus jannaschii.</title>
        <authorList>
            <person name="Bult C.J."/>
            <person name="White O."/>
            <person name="Olsen G.J."/>
            <person name="Zhou L."/>
            <person name="Fleischmann R.D."/>
            <person name="Sutton G.G."/>
            <person name="Blake J.A."/>
            <person name="FitzGerald L.M."/>
            <person name="Clayton R.A."/>
            <person name="Gocayne J.D."/>
            <person name="Kerlavage A.R."/>
            <person name="Dougherty B.A."/>
            <person name="Tomb J.-F."/>
            <person name="Adams M.D."/>
            <person name="Reich C.I."/>
            <person name="Overbeek R."/>
            <person name="Kirkness E.F."/>
            <person name="Weinstock K.G."/>
            <person name="Merrick J.M."/>
            <person name="Glodek A."/>
            <person name="Scott J.L."/>
            <person name="Geoghagen N.S.M."/>
            <person name="Weidman J.F."/>
            <person name="Fuhrmann J.L."/>
            <person name="Nguyen D."/>
            <person name="Utterback T.R."/>
            <person name="Kelley J.M."/>
            <person name="Peterson J.D."/>
            <person name="Sadow P.W."/>
            <person name="Hanna M.C."/>
            <person name="Cotton M.D."/>
            <person name="Roberts K.M."/>
            <person name="Hurst M.A."/>
            <person name="Kaine B.P."/>
            <person name="Borodovsky M."/>
            <person name="Klenk H.-P."/>
            <person name="Fraser C.M."/>
            <person name="Smith H.O."/>
            <person name="Woese C.R."/>
            <person name="Venter J.C."/>
        </authorList>
    </citation>
    <scope>NUCLEOTIDE SEQUENCE [LARGE SCALE GENOMIC DNA]</scope>
    <source>
        <strain>ATCC 43067 / DSM 2661 / JAL-1 / JCM 10045 / NBRC 100440</strain>
    </source>
</reference>
<sequence>MWFKKRIIIKETNILLKVDDKGYFKKAEEIILKNRLELERYILKNPYFLTSYFPVDVEDDAPEIVRLMAIAGEIANVGPMASVAGAIAEMLIKNLNAKNIIAENGGDICLRAKKDVIIGLYAGNSKITGEVGFRLKKEKIKNIYGVCTSSATVGHSVSFGEADAVTVFAKSSAIADAAATAICNASRGRDEEEMINNALEKADEIKKIDGIFVVVKDKVGIKGKIPELVKTDKRITLGELFDIY</sequence>
<comment type="similarity">
    <text evidence="1">Belongs to the UPF0280 family.</text>
</comment>